<comment type="function">
    <text evidence="1">Catalyzes the decarboxylation of 3-keto-L-gulonate-6-P into L-xylulose-5-P. Is involved in the anaerobic L-ascorbate utilization.</text>
</comment>
<comment type="catalytic activity">
    <reaction evidence="1">
        <text>3-dehydro-L-gulonate 6-phosphate + H(+) = L-xylulose 5-phosphate + CO2</text>
        <dbReference type="Rhea" id="RHEA:14353"/>
        <dbReference type="ChEBI" id="CHEBI:15378"/>
        <dbReference type="ChEBI" id="CHEBI:16526"/>
        <dbReference type="ChEBI" id="CHEBI:57829"/>
        <dbReference type="ChEBI" id="CHEBI:58774"/>
        <dbReference type="EC" id="4.1.1.85"/>
    </reaction>
</comment>
<comment type="cofactor">
    <cofactor evidence="1">
        <name>Mg(2+)</name>
        <dbReference type="ChEBI" id="CHEBI:18420"/>
    </cofactor>
    <text evidence="1">Binds 1 Mg(2+) ion per subunit.</text>
</comment>
<comment type="pathway">
    <text evidence="1">Cofactor degradation; L-ascorbate degradation; D-xylulose 5-phosphate from L-ascorbate: step 2/4.</text>
</comment>
<comment type="subunit">
    <text evidence="1">Homodimer.</text>
</comment>
<comment type="induction">
    <text evidence="1">Induced by L-ascorbate. Repressed by UlaR.</text>
</comment>
<comment type="similarity">
    <text evidence="1">Belongs to the HPS/KGPDC family. KGPDC subfamily.</text>
</comment>
<dbReference type="EC" id="4.1.1.85" evidence="1"/>
<dbReference type="EMBL" id="CU928163">
    <property type="protein sequence ID" value="CAR15842.1"/>
    <property type="molecule type" value="Genomic_DNA"/>
</dbReference>
<dbReference type="RefSeq" id="WP_000056771.1">
    <property type="nucleotide sequence ID" value="NC_011751.1"/>
</dbReference>
<dbReference type="RefSeq" id="YP_002415326.1">
    <property type="nucleotide sequence ID" value="NC_011751.1"/>
</dbReference>
<dbReference type="SMR" id="B7NGD0"/>
<dbReference type="STRING" id="585056.ECUMN_4729"/>
<dbReference type="KEGG" id="eum:ECUMN_4729"/>
<dbReference type="PATRIC" id="fig|585056.7.peg.4892"/>
<dbReference type="HOGENOM" id="CLU_081825_0_0_6"/>
<dbReference type="UniPathway" id="UPA00263">
    <property type="reaction ID" value="UER00378"/>
</dbReference>
<dbReference type="Proteomes" id="UP000007097">
    <property type="component" value="Chromosome"/>
</dbReference>
<dbReference type="GO" id="GO:0033982">
    <property type="term" value="F:3-dehydro-L-gulonate-6-phosphate decarboxylase activity"/>
    <property type="evidence" value="ECO:0007669"/>
    <property type="project" value="UniProtKB-EC"/>
</dbReference>
<dbReference type="GO" id="GO:0000287">
    <property type="term" value="F:magnesium ion binding"/>
    <property type="evidence" value="ECO:0007669"/>
    <property type="project" value="UniProtKB-UniRule"/>
</dbReference>
<dbReference type="GO" id="GO:0004590">
    <property type="term" value="F:orotidine-5'-phosphate decarboxylase activity"/>
    <property type="evidence" value="ECO:0007669"/>
    <property type="project" value="InterPro"/>
</dbReference>
<dbReference type="GO" id="GO:0006207">
    <property type="term" value="P:'de novo' pyrimidine nucleobase biosynthetic process"/>
    <property type="evidence" value="ECO:0007669"/>
    <property type="project" value="InterPro"/>
</dbReference>
<dbReference type="GO" id="GO:0019854">
    <property type="term" value="P:L-ascorbic acid catabolic process"/>
    <property type="evidence" value="ECO:0007669"/>
    <property type="project" value="UniProtKB-UniRule"/>
</dbReference>
<dbReference type="CDD" id="cd04726">
    <property type="entry name" value="KGPDC_HPS"/>
    <property type="match status" value="1"/>
</dbReference>
<dbReference type="FunFam" id="3.20.20.70:FF:000022">
    <property type="entry name" value="3-keto-L-gulonate-6-phosphate decarboxylase UlaD"/>
    <property type="match status" value="1"/>
</dbReference>
<dbReference type="Gene3D" id="3.20.20.70">
    <property type="entry name" value="Aldolase class I"/>
    <property type="match status" value="1"/>
</dbReference>
<dbReference type="HAMAP" id="MF_01267">
    <property type="entry name" value="UlaD"/>
    <property type="match status" value="1"/>
</dbReference>
<dbReference type="InterPro" id="IPR023942">
    <property type="entry name" value="3-keto-L-gulonate6Pdecase_UlaD"/>
</dbReference>
<dbReference type="InterPro" id="IPR013785">
    <property type="entry name" value="Aldolase_TIM"/>
</dbReference>
<dbReference type="InterPro" id="IPR041710">
    <property type="entry name" value="HPS/KGPDC"/>
</dbReference>
<dbReference type="InterPro" id="IPR001754">
    <property type="entry name" value="OMPdeCOase_dom"/>
</dbReference>
<dbReference type="InterPro" id="IPR011060">
    <property type="entry name" value="RibuloseP-bd_barrel"/>
</dbReference>
<dbReference type="NCBIfam" id="NF009832">
    <property type="entry name" value="PRK13306.1"/>
    <property type="match status" value="1"/>
</dbReference>
<dbReference type="PANTHER" id="PTHR35039">
    <property type="entry name" value="3-KETO-L-GULONATE-6-PHOSPHATE DECARBOXYLASE SGBH-RELATED"/>
    <property type="match status" value="1"/>
</dbReference>
<dbReference type="PANTHER" id="PTHR35039:SF3">
    <property type="entry name" value="3-KETO-L-GULONATE-6-PHOSPHATE DECARBOXYLASE SGBH-RELATED"/>
    <property type="match status" value="1"/>
</dbReference>
<dbReference type="Pfam" id="PF00215">
    <property type="entry name" value="OMPdecase"/>
    <property type="match status" value="1"/>
</dbReference>
<dbReference type="SMART" id="SM00934">
    <property type="entry name" value="OMPdecase"/>
    <property type="match status" value="1"/>
</dbReference>
<dbReference type="SUPFAM" id="SSF51366">
    <property type="entry name" value="Ribulose-phoshate binding barrel"/>
    <property type="match status" value="1"/>
</dbReference>
<name>ULAD_ECOLU</name>
<keyword id="KW-0119">Carbohydrate metabolism</keyword>
<keyword id="KW-0210">Decarboxylase</keyword>
<keyword id="KW-0456">Lyase</keyword>
<keyword id="KW-0460">Magnesium</keyword>
<keyword id="KW-0479">Metal-binding</keyword>
<proteinExistence type="inferred from homology"/>
<reference key="1">
    <citation type="journal article" date="2009" name="PLoS Genet.">
        <title>Organised genome dynamics in the Escherichia coli species results in highly diverse adaptive paths.</title>
        <authorList>
            <person name="Touchon M."/>
            <person name="Hoede C."/>
            <person name="Tenaillon O."/>
            <person name="Barbe V."/>
            <person name="Baeriswyl S."/>
            <person name="Bidet P."/>
            <person name="Bingen E."/>
            <person name="Bonacorsi S."/>
            <person name="Bouchier C."/>
            <person name="Bouvet O."/>
            <person name="Calteau A."/>
            <person name="Chiapello H."/>
            <person name="Clermont O."/>
            <person name="Cruveiller S."/>
            <person name="Danchin A."/>
            <person name="Diard M."/>
            <person name="Dossat C."/>
            <person name="Karoui M.E."/>
            <person name="Frapy E."/>
            <person name="Garry L."/>
            <person name="Ghigo J.M."/>
            <person name="Gilles A.M."/>
            <person name="Johnson J."/>
            <person name="Le Bouguenec C."/>
            <person name="Lescat M."/>
            <person name="Mangenot S."/>
            <person name="Martinez-Jehanne V."/>
            <person name="Matic I."/>
            <person name="Nassif X."/>
            <person name="Oztas S."/>
            <person name="Petit M.A."/>
            <person name="Pichon C."/>
            <person name="Rouy Z."/>
            <person name="Ruf C.S."/>
            <person name="Schneider D."/>
            <person name="Tourret J."/>
            <person name="Vacherie B."/>
            <person name="Vallenet D."/>
            <person name="Medigue C."/>
            <person name="Rocha E.P.C."/>
            <person name="Denamur E."/>
        </authorList>
    </citation>
    <scope>NUCLEOTIDE SEQUENCE [LARGE SCALE GENOMIC DNA]</scope>
    <source>
        <strain>UMN026 / ExPEC</strain>
    </source>
</reference>
<sequence>MSLPMLQVALDNQTMDSAYETTRQIAEEVDIIEVGTILCVGEGVRAVRDLKALYPHKIVLADAKIADAGKILSRMCFEANADWVTVICCADINTAKGALDVAKEFNGDVQIELTGYWTWEQAQQWRDAGIQQVVYHRSRDAQAAGVAWGEADITAIKRLSDMGFKVTVTGGLALEDLPLFKGIPIHVFIAGRSIRDAASPVEAARQFKRSIAELWG</sequence>
<gene>
    <name evidence="1" type="primary">ulaD</name>
    <name type="ordered locus">ECUMN_4729</name>
</gene>
<feature type="chain" id="PRO_1000140114" description="3-keto-L-gulonate-6-phosphate decarboxylase UlaD">
    <location>
        <begin position="1"/>
        <end position="216"/>
    </location>
</feature>
<feature type="binding site" evidence="1">
    <location>
        <position position="11"/>
    </location>
    <ligand>
        <name>substrate</name>
    </ligand>
</feature>
<feature type="binding site" evidence="1">
    <location>
        <position position="33"/>
    </location>
    <ligand>
        <name>Mg(2+)</name>
        <dbReference type="ChEBI" id="CHEBI:18420"/>
    </ligand>
</feature>
<feature type="binding site" evidence="1">
    <location>
        <position position="62"/>
    </location>
    <ligand>
        <name>Mg(2+)</name>
        <dbReference type="ChEBI" id="CHEBI:18420"/>
    </ligand>
</feature>
<feature type="binding site" evidence="1">
    <location>
        <position position="192"/>
    </location>
    <ligand>
        <name>substrate</name>
    </ligand>
</feature>
<feature type="site" description="Transition state stabilizer" evidence="1">
    <location>
        <position position="64"/>
    </location>
</feature>
<feature type="site" description="Transition state stabilizer" evidence="1">
    <location>
        <position position="67"/>
    </location>
</feature>
<accession>B7NGD0</accession>
<protein>
    <recommendedName>
        <fullName evidence="1">3-keto-L-gulonate-6-phosphate decarboxylase UlaD</fullName>
        <ecNumber evidence="1">4.1.1.85</ecNumber>
    </recommendedName>
    <alternativeName>
        <fullName evidence="1">3-dehydro-L-gulonate-6-phosphate decarboxylase</fullName>
    </alternativeName>
    <alternativeName>
        <fullName evidence="1">KGPDC</fullName>
    </alternativeName>
    <alternativeName>
        <fullName evidence="1">L-ascorbate utilization protein D</fullName>
    </alternativeName>
</protein>
<evidence type="ECO:0000255" key="1">
    <source>
        <dbReference type="HAMAP-Rule" id="MF_01267"/>
    </source>
</evidence>
<organism>
    <name type="scientific">Escherichia coli O17:K52:H18 (strain UMN026 / ExPEC)</name>
    <dbReference type="NCBI Taxonomy" id="585056"/>
    <lineage>
        <taxon>Bacteria</taxon>
        <taxon>Pseudomonadati</taxon>
        <taxon>Pseudomonadota</taxon>
        <taxon>Gammaproteobacteria</taxon>
        <taxon>Enterobacterales</taxon>
        <taxon>Enterobacteriaceae</taxon>
        <taxon>Escherichia</taxon>
    </lineage>
</organism>